<keyword id="KW-0012">Acyltransferase</keyword>
<keyword id="KW-0963">Cytoplasm</keyword>
<keyword id="KW-0275">Fatty acid biosynthesis</keyword>
<keyword id="KW-0276">Fatty acid metabolism</keyword>
<keyword id="KW-0444">Lipid biosynthesis</keyword>
<keyword id="KW-0443">Lipid metabolism</keyword>
<keyword id="KW-0511">Multifunctional enzyme</keyword>
<keyword id="KW-1185">Reference proteome</keyword>
<keyword id="KW-0808">Transferase</keyword>
<organism>
    <name type="scientific">Brucella canis (strain ATCC 23365 / NCTC 10854 / RM-666)</name>
    <dbReference type="NCBI Taxonomy" id="483179"/>
    <lineage>
        <taxon>Bacteria</taxon>
        <taxon>Pseudomonadati</taxon>
        <taxon>Pseudomonadota</taxon>
        <taxon>Alphaproteobacteria</taxon>
        <taxon>Hyphomicrobiales</taxon>
        <taxon>Brucellaceae</taxon>
        <taxon>Brucella/Ochrobactrum group</taxon>
        <taxon>Brucella</taxon>
    </lineage>
</organism>
<reference key="1">
    <citation type="submission" date="2007-10" db="EMBL/GenBank/DDBJ databases">
        <title>Brucella canis ATCC 23365 whole genome shotgun sequencing project.</title>
        <authorList>
            <person name="Setubal J.C."/>
            <person name="Bowns C."/>
            <person name="Boyle S."/>
            <person name="Crasta O.R."/>
            <person name="Czar M.J."/>
            <person name="Dharmanolla C."/>
            <person name="Gillespie J.J."/>
            <person name="Kenyon R.W."/>
            <person name="Lu J."/>
            <person name="Mane S."/>
            <person name="Mohapatra S."/>
            <person name="Nagrani S."/>
            <person name="Purkayastha A."/>
            <person name="Rajasimha H.K."/>
            <person name="Shallom J.M."/>
            <person name="Shallom S."/>
            <person name="Shukla M."/>
            <person name="Snyder E.E."/>
            <person name="Sobral B.W."/>
            <person name="Wattam A.R."/>
            <person name="Will R."/>
            <person name="Williams K."/>
            <person name="Yoo H."/>
            <person name="Bruce D."/>
            <person name="Detter C."/>
            <person name="Munk C."/>
            <person name="Brettin T.S."/>
        </authorList>
    </citation>
    <scope>NUCLEOTIDE SEQUENCE [LARGE SCALE GENOMIC DNA]</scope>
    <source>
        <strain>ATCC 23365 / NCTC 10854 / RM-666</strain>
    </source>
</reference>
<sequence length="323" mass="34429">MIRSVVRGIGSALPKRVMKNTDFEGIVETSDEWIVQRTGIRERHIAGEGETTVSLGAAAARAAIENAGLQPSDIDLVLLATSTPNNTFPASAVAIQRELGITRGFAFDLQAVCSGFIYAITTADLYIRGGMARRVLVIGAETFSHILDWTDRTTCVLFGDGAGAIVLEAAEGHGLTSDRGILAANLRSDGNHKEKLYVDGGPSTTQTVGHLRMEGREVFKHAVGMITDVIEASFEATGLTAEDIDWFVPHQANKRIIDASAKKLHIAEEKVVITVDRHGNTSAASVPLALATAVADGRIKKGDLVLLEAMGGGFTWGAVLVRW</sequence>
<proteinExistence type="inferred from homology"/>
<evidence type="ECO:0000255" key="1">
    <source>
        <dbReference type="HAMAP-Rule" id="MF_01815"/>
    </source>
</evidence>
<feature type="chain" id="PRO_1000187849" description="Beta-ketoacyl-[acyl-carrier-protein] synthase III">
    <location>
        <begin position="1"/>
        <end position="323"/>
    </location>
</feature>
<feature type="region of interest" description="ACP-binding" evidence="1">
    <location>
        <begin position="251"/>
        <end position="255"/>
    </location>
</feature>
<feature type="active site" evidence="1">
    <location>
        <position position="113"/>
    </location>
</feature>
<feature type="active site" evidence="1">
    <location>
        <position position="250"/>
    </location>
</feature>
<feature type="active site" evidence="1">
    <location>
        <position position="280"/>
    </location>
</feature>
<gene>
    <name evidence="1" type="primary">fabH</name>
    <name type="ordered locus">BCAN_A0789</name>
</gene>
<accession>A9MAF6</accession>
<protein>
    <recommendedName>
        <fullName evidence="1">Beta-ketoacyl-[acyl-carrier-protein] synthase III</fullName>
        <shortName evidence="1">Beta-ketoacyl-ACP synthase III</shortName>
        <shortName evidence="1">KAS III</shortName>
        <ecNumber evidence="1">2.3.1.180</ecNumber>
    </recommendedName>
    <alternativeName>
        <fullName evidence="1">3-oxoacyl-[acyl-carrier-protein] synthase 3</fullName>
    </alternativeName>
    <alternativeName>
        <fullName evidence="1">3-oxoacyl-[acyl-carrier-protein] synthase III</fullName>
    </alternativeName>
</protein>
<name>FABH_BRUC2</name>
<comment type="function">
    <text evidence="1">Catalyzes the condensation reaction of fatty acid synthesis by the addition to an acyl acceptor of two carbons from malonyl-ACP. Catalyzes the first condensation reaction which initiates fatty acid synthesis and may therefore play a role in governing the total rate of fatty acid production. Possesses both acetoacetyl-ACP synthase and acetyl transacylase activities. Its substrate specificity determines the biosynthesis of branched-chain and/or straight-chain of fatty acids.</text>
</comment>
<comment type="catalytic activity">
    <reaction evidence="1">
        <text>malonyl-[ACP] + acetyl-CoA + H(+) = 3-oxobutanoyl-[ACP] + CO2 + CoA</text>
        <dbReference type="Rhea" id="RHEA:12080"/>
        <dbReference type="Rhea" id="RHEA-COMP:9623"/>
        <dbReference type="Rhea" id="RHEA-COMP:9625"/>
        <dbReference type="ChEBI" id="CHEBI:15378"/>
        <dbReference type="ChEBI" id="CHEBI:16526"/>
        <dbReference type="ChEBI" id="CHEBI:57287"/>
        <dbReference type="ChEBI" id="CHEBI:57288"/>
        <dbReference type="ChEBI" id="CHEBI:78449"/>
        <dbReference type="ChEBI" id="CHEBI:78450"/>
        <dbReference type="EC" id="2.3.1.180"/>
    </reaction>
</comment>
<comment type="pathway">
    <text evidence="1">Lipid metabolism; fatty acid biosynthesis.</text>
</comment>
<comment type="subunit">
    <text evidence="1">Homodimer.</text>
</comment>
<comment type="subcellular location">
    <subcellularLocation>
        <location evidence="1">Cytoplasm</location>
    </subcellularLocation>
</comment>
<comment type="domain">
    <text evidence="1">The last Arg residue of the ACP-binding site is essential for the weak association between ACP/AcpP and FabH.</text>
</comment>
<comment type="similarity">
    <text evidence="1">Belongs to the thiolase-like superfamily. FabH family.</text>
</comment>
<dbReference type="EC" id="2.3.1.180" evidence="1"/>
<dbReference type="EMBL" id="CP000872">
    <property type="protein sequence ID" value="ABX61859.1"/>
    <property type="molecule type" value="Genomic_DNA"/>
</dbReference>
<dbReference type="RefSeq" id="WP_004690739.1">
    <property type="nucleotide sequence ID" value="NC_010103.1"/>
</dbReference>
<dbReference type="SMR" id="A9MAF6"/>
<dbReference type="GeneID" id="55590490"/>
<dbReference type="KEGG" id="bcs:BCAN_A0789"/>
<dbReference type="HOGENOM" id="CLU_039592_3_1_5"/>
<dbReference type="UniPathway" id="UPA00094"/>
<dbReference type="Proteomes" id="UP000001385">
    <property type="component" value="Chromosome I"/>
</dbReference>
<dbReference type="GO" id="GO:0005737">
    <property type="term" value="C:cytoplasm"/>
    <property type="evidence" value="ECO:0007669"/>
    <property type="project" value="UniProtKB-SubCell"/>
</dbReference>
<dbReference type="GO" id="GO:0004315">
    <property type="term" value="F:3-oxoacyl-[acyl-carrier-protein] synthase activity"/>
    <property type="evidence" value="ECO:0007669"/>
    <property type="project" value="InterPro"/>
</dbReference>
<dbReference type="GO" id="GO:0033818">
    <property type="term" value="F:beta-ketoacyl-acyl-carrier-protein synthase III activity"/>
    <property type="evidence" value="ECO:0007669"/>
    <property type="project" value="UniProtKB-UniRule"/>
</dbReference>
<dbReference type="GO" id="GO:0006633">
    <property type="term" value="P:fatty acid biosynthetic process"/>
    <property type="evidence" value="ECO:0007669"/>
    <property type="project" value="UniProtKB-UniRule"/>
</dbReference>
<dbReference type="CDD" id="cd00830">
    <property type="entry name" value="KAS_III"/>
    <property type="match status" value="1"/>
</dbReference>
<dbReference type="FunFam" id="3.40.47.10:FF:000004">
    <property type="entry name" value="3-oxoacyl-[acyl-carrier-protein] synthase 3"/>
    <property type="match status" value="1"/>
</dbReference>
<dbReference type="Gene3D" id="3.40.47.10">
    <property type="match status" value="1"/>
</dbReference>
<dbReference type="HAMAP" id="MF_01815">
    <property type="entry name" value="FabH"/>
    <property type="match status" value="1"/>
</dbReference>
<dbReference type="InterPro" id="IPR013747">
    <property type="entry name" value="ACP_syn_III_C"/>
</dbReference>
<dbReference type="InterPro" id="IPR013751">
    <property type="entry name" value="ACP_syn_III_N"/>
</dbReference>
<dbReference type="InterPro" id="IPR004655">
    <property type="entry name" value="FabH"/>
</dbReference>
<dbReference type="InterPro" id="IPR016039">
    <property type="entry name" value="Thiolase-like"/>
</dbReference>
<dbReference type="NCBIfam" id="TIGR00747">
    <property type="entry name" value="fabH"/>
    <property type="match status" value="1"/>
</dbReference>
<dbReference type="NCBIfam" id="NF006829">
    <property type="entry name" value="PRK09352.1"/>
    <property type="match status" value="1"/>
</dbReference>
<dbReference type="PANTHER" id="PTHR43091">
    <property type="entry name" value="3-OXOACYL-[ACYL-CARRIER-PROTEIN] SYNTHASE"/>
    <property type="match status" value="1"/>
</dbReference>
<dbReference type="PANTHER" id="PTHR43091:SF1">
    <property type="entry name" value="BETA-KETOACYL-[ACYL-CARRIER-PROTEIN] SYNTHASE III, CHLOROPLASTIC"/>
    <property type="match status" value="1"/>
</dbReference>
<dbReference type="Pfam" id="PF08545">
    <property type="entry name" value="ACP_syn_III"/>
    <property type="match status" value="1"/>
</dbReference>
<dbReference type="Pfam" id="PF08541">
    <property type="entry name" value="ACP_syn_III_C"/>
    <property type="match status" value="1"/>
</dbReference>
<dbReference type="SUPFAM" id="SSF53901">
    <property type="entry name" value="Thiolase-like"/>
    <property type="match status" value="1"/>
</dbReference>